<proteinExistence type="evidence at protein level"/>
<sequence length="224" mass="25209">MRSYLILRLAGPMQAWGQPTFEGTRPTGRFPTRSGLLGLLGACLGIQRDDTSSLQALSESVQFAVRCDELILDDRRVSVTGLRDYHTVLGAREDYRGLKSHETIQTWREYLCDASFTVALWLTPHATMVISELEKAVLKPRYTPYLGRRSCPLTHPLFLGTCQASDPQKALLNYEPVGGDIYSEESVTGHHLKFTARDEPMITLPRQFASREWYVIKGGMDVSQ</sequence>
<protein>
    <recommendedName>
        <fullName>CRISPR system Cascade subunit CasD</fullName>
    </recommendedName>
</protein>
<feature type="chain" id="PRO_0000013896" description="CRISPR system Cascade subunit CasD">
    <location>
        <begin position="1"/>
        <end position="224"/>
    </location>
</feature>
<feature type="strand" evidence="11">
    <location>
        <begin position="2"/>
        <end position="14"/>
    </location>
</feature>
<feature type="strand" evidence="11">
    <location>
        <begin position="22"/>
        <end position="25"/>
    </location>
</feature>
<feature type="helix" evidence="11">
    <location>
        <begin position="33"/>
        <end position="43"/>
    </location>
</feature>
<feature type="helix" evidence="11">
    <location>
        <begin position="51"/>
        <end position="60"/>
    </location>
</feature>
<feature type="strand" evidence="11">
    <location>
        <begin position="61"/>
        <end position="68"/>
    </location>
</feature>
<feature type="strand" evidence="11">
    <location>
        <begin position="70"/>
        <end position="72"/>
    </location>
</feature>
<feature type="strand" evidence="11">
    <location>
        <begin position="75"/>
        <end position="77"/>
    </location>
</feature>
<feature type="strand" evidence="11">
    <location>
        <begin position="80"/>
        <end position="89"/>
    </location>
</feature>
<feature type="strand" evidence="11">
    <location>
        <begin position="92"/>
        <end position="98"/>
    </location>
</feature>
<feature type="strand" evidence="11">
    <location>
        <begin position="102"/>
        <end position="122"/>
    </location>
</feature>
<feature type="helix" evidence="11">
    <location>
        <begin position="130"/>
        <end position="138"/>
    </location>
</feature>
<feature type="strand" evidence="11">
    <location>
        <begin position="146"/>
        <end position="148"/>
    </location>
</feature>
<feature type="strand" evidence="11">
    <location>
        <begin position="157"/>
        <end position="166"/>
    </location>
</feature>
<feature type="helix" evidence="11">
    <location>
        <begin position="167"/>
        <end position="171"/>
    </location>
</feature>
<feature type="strand" evidence="11">
    <location>
        <begin position="174"/>
        <end position="176"/>
    </location>
</feature>
<feature type="strand" evidence="11">
    <location>
        <begin position="181"/>
        <end position="185"/>
    </location>
</feature>
<feature type="strand" evidence="11">
    <location>
        <begin position="193"/>
        <end position="201"/>
    </location>
</feature>
<feature type="strand" evidence="10">
    <location>
        <begin position="202"/>
        <end position="204"/>
    </location>
</feature>
<feature type="strand" evidence="11">
    <location>
        <begin position="207"/>
        <end position="216"/>
    </location>
</feature>
<gene>
    <name type="primary">casD</name>
    <name type="synonym">cas5</name>
    <name type="synonym">ygcI</name>
    <name type="ordered locus">b2757</name>
    <name type="ordered locus">JW5844</name>
</gene>
<organism>
    <name type="scientific">Escherichia coli (strain K12)</name>
    <dbReference type="NCBI Taxonomy" id="83333"/>
    <lineage>
        <taxon>Bacteria</taxon>
        <taxon>Pseudomonadati</taxon>
        <taxon>Pseudomonadota</taxon>
        <taxon>Gammaproteobacteria</taxon>
        <taxon>Enterobacterales</taxon>
        <taxon>Enterobacteriaceae</taxon>
        <taxon>Escherichia</taxon>
    </lineage>
</organism>
<accession>Q46898</accession>
<accession>Q2MA72</accession>
<reference key="1">
    <citation type="journal article" date="1997" name="Science">
        <title>The complete genome sequence of Escherichia coli K-12.</title>
        <authorList>
            <person name="Blattner F.R."/>
            <person name="Plunkett G. III"/>
            <person name="Bloch C.A."/>
            <person name="Perna N.T."/>
            <person name="Burland V."/>
            <person name="Riley M."/>
            <person name="Collado-Vides J."/>
            <person name="Glasner J.D."/>
            <person name="Rode C.K."/>
            <person name="Mayhew G.F."/>
            <person name="Gregor J."/>
            <person name="Davis N.W."/>
            <person name="Kirkpatrick H.A."/>
            <person name="Goeden M.A."/>
            <person name="Rose D.J."/>
            <person name="Mau B."/>
            <person name="Shao Y."/>
        </authorList>
    </citation>
    <scope>NUCLEOTIDE SEQUENCE [LARGE SCALE GENOMIC DNA]</scope>
    <source>
        <strain>K12 / MG1655 / ATCC 47076</strain>
    </source>
</reference>
<reference key="2">
    <citation type="journal article" date="2006" name="Mol. Syst. Biol.">
        <title>Highly accurate genome sequences of Escherichia coli K-12 strains MG1655 and W3110.</title>
        <authorList>
            <person name="Hayashi K."/>
            <person name="Morooka N."/>
            <person name="Yamamoto Y."/>
            <person name="Fujita K."/>
            <person name="Isono K."/>
            <person name="Choi S."/>
            <person name="Ohtsubo E."/>
            <person name="Baba T."/>
            <person name="Wanner B.L."/>
            <person name="Mori H."/>
            <person name="Horiuchi T."/>
        </authorList>
    </citation>
    <scope>NUCLEOTIDE SEQUENCE [LARGE SCALE GENOMIC DNA]</scope>
    <source>
        <strain>K12 / W3110 / ATCC 27325 / DSM 5911</strain>
    </source>
</reference>
<reference key="3">
    <citation type="journal article" date="2008" name="Science">
        <title>Small CRISPR RNAs guide antiviral defense in prokaryotes.</title>
        <authorList>
            <person name="Brouns S.J."/>
            <person name="Jore M.M."/>
            <person name="Lundgren M."/>
            <person name="Westra E.R."/>
            <person name="Slijkhuis R.J."/>
            <person name="Snijders A.P."/>
            <person name="Dickman M.J."/>
            <person name="Makarova K.S."/>
            <person name="Koonin E.V."/>
            <person name="van der Oost J."/>
        </authorList>
    </citation>
    <scope>SUBUNIT</scope>
    <scope>DISRUPTION PHENOTYPE</scope>
    <source>
        <strain>K12 / W3110 / ATCC 27325 / DSM 5911</strain>
    </source>
</reference>
<reference key="4">
    <citation type="journal article" date="2009" name="J. Bacteriol.">
        <title>Involvement of the leucine response transcription factor LeuO in regulation of the genes for sulfa drug efflux.</title>
        <authorList>
            <person name="Shimada T."/>
            <person name="Yamamoto K."/>
            <person name="Ishihama A."/>
        </authorList>
    </citation>
    <scope>OPERON STRUCTURE</scope>
    <scope>INDUCTION BY LEUO</scope>
    <source>
        <strain>K12 / BW25113</strain>
    </source>
</reference>
<reference key="5">
    <citation type="journal article" date="2010" name="Mol. Microbiol.">
        <title>Identification and characterization of E. coli CRISPR-cas promoters and their silencing by H-NS.</title>
        <authorList>
            <person name="Pul U."/>
            <person name="Wurm R."/>
            <person name="Arslan Z."/>
            <person name="Geissen R."/>
            <person name="Hofmann N."/>
            <person name="Wagner R."/>
        </authorList>
    </citation>
    <scope>INDUCTION BY H-NS</scope>
    <source>
        <strain>K12</strain>
    </source>
</reference>
<reference key="6">
    <citation type="journal article" date="2011" name="Mol. Microbiol.">
        <title>Envelope stress is a trigger of CRISPR RNA-mediated DNA silencing in Escherichia coli.</title>
        <authorList>
            <person name="Perez-Rodriguez R."/>
            <person name="Haitjema C."/>
            <person name="Huang Q."/>
            <person name="Nam K.H."/>
            <person name="Bernardis S."/>
            <person name="Ke A."/>
            <person name="DeLisa M.P."/>
        </authorList>
    </citation>
    <scope>INTERACTION WITH CASC</scope>
    <scope>SUBUNIT</scope>
    <scope>INDUCTION BY BAER</scope>
    <scope>ROLE IN PLASMID SILENCING</scope>
    <scope>DISRUPTION PHENOTYPE</scope>
    <source>
        <strain>K12 / BW25113</strain>
    </source>
</reference>
<reference key="7">
    <citation type="journal article" date="2011" name="Nat. Struct. Mol. Biol.">
        <title>Structural basis for CRISPR RNA-guided DNA recognition by Cascade.</title>
        <authorList>
            <person name="Jore M.M."/>
            <person name="Lundgren M."/>
            <person name="van Duijn E."/>
            <person name="Bultema J.B."/>
            <person name="Westra E.R."/>
            <person name="Waghmare S.P."/>
            <person name="Wiedenheft B."/>
            <person name="Pul U."/>
            <person name="Wurm R."/>
            <person name="Wagner R."/>
            <person name="Beijer M.R."/>
            <person name="Barendregt A."/>
            <person name="Zhou K."/>
            <person name="Snijders A.P."/>
            <person name="Dickman M.J."/>
            <person name="Doudna J.A."/>
            <person name="Boekema E.J."/>
            <person name="Heck A.J."/>
            <person name="van der Oost J."/>
            <person name="Brouns S.J."/>
        </authorList>
    </citation>
    <scope>FUNCTION IN CASCADE</scope>
    <scope>MASS SPECTROMETRY</scope>
    <scope>SUBUNIT</scope>
    <scope>STRUCTURE BY ELECTRON MICROSCOPY</scope>
    <scope>INTERACTION WITH CASD</scope>
    <scope>DISRUPTION PHENOTYPE</scope>
    <source>
        <strain>K12</strain>
    </source>
</reference>
<reference key="8">
    <citation type="journal article" date="2011" name="Nature">
        <title>Structures of the RNA-guided surveillance complex from a bacterial immune system.</title>
        <authorList>
            <person name="Wiedenheft B."/>
            <person name="Lander G.C."/>
            <person name="Zhou K."/>
            <person name="Jore M.M."/>
            <person name="Brouns S.J."/>
            <person name="van der Oost J."/>
            <person name="Doudna J.A."/>
            <person name="Nogales E."/>
        </authorList>
    </citation>
    <scope>STRUCTURE BY ELECTRON MICROSCOPY OF CASCADE WITH AND WITHOUT TARGET RNA</scope>
    <scope>INTERACTION WITH CASA AND CASC</scope>
    <source>
        <strain>K12</strain>
    </source>
</reference>
<reference key="9">
    <citation type="journal article" date="2011" name="Biochem. J.">
        <title>Helicase dissociation and annealing of RNA-DNA hybrids by Escherichia coli Cas3 protein.</title>
        <authorList>
            <person name="Howard J.A."/>
            <person name="Delmas S."/>
            <person name="Ivancic-Bace I."/>
            <person name="Bolt E.L."/>
        </authorList>
    </citation>
    <scope>FUNCTION IN R-LOOP FORMATION</scope>
    <scope>SUBUNIT</scope>
    <source>
        <strain>K12 / MG1655 / ATCC 47076</strain>
    </source>
</reference>
<reference key="10">
    <citation type="journal article" date="2012" name="Mol. Cell">
        <title>CRISPR immunity relies on the consecutive binding and degradation of negatively supercoiled invader DNA by Cascade and Cas3.</title>
        <authorList>
            <person name="Westra E.R."/>
            <person name="van Erp P.B."/>
            <person name="Kunne T."/>
            <person name="Wong S.P."/>
            <person name="Staals R.H."/>
            <person name="Seegers C.L."/>
            <person name="Bollen S."/>
            <person name="Jore M.M."/>
            <person name="Semenova E."/>
            <person name="Severinov K."/>
            <person name="de Vos W.M."/>
            <person name="Dame R.T."/>
            <person name="de Vries R."/>
            <person name="Brouns S.J."/>
            <person name="van der Oost J."/>
        </authorList>
    </citation>
    <scope>SUBUNIT</scope>
    <scope>CASCADE DNA-BINDING</scope>
    <source>
        <strain>K12 / MG1655 / ATCC 47076</strain>
    </source>
</reference>
<name>CAS5_ECOLI</name>
<dbReference type="EMBL" id="U29579">
    <property type="protein sequence ID" value="AAA69267.1"/>
    <property type="status" value="ALT_INIT"/>
    <property type="molecule type" value="Genomic_DNA"/>
</dbReference>
<dbReference type="EMBL" id="U00096">
    <property type="protein sequence ID" value="AAC75799.2"/>
    <property type="molecule type" value="Genomic_DNA"/>
</dbReference>
<dbReference type="EMBL" id="AP009048">
    <property type="protein sequence ID" value="BAE76834.1"/>
    <property type="molecule type" value="Genomic_DNA"/>
</dbReference>
<dbReference type="PIR" id="A65057">
    <property type="entry name" value="A65057"/>
</dbReference>
<dbReference type="RefSeq" id="NP_417237.2">
    <property type="nucleotide sequence ID" value="NC_000913.3"/>
</dbReference>
<dbReference type="PDB" id="4QYZ">
    <property type="method" value="X-ray"/>
    <property type="resolution" value="3.03 A"/>
    <property type="chains" value="J=1-224"/>
</dbReference>
<dbReference type="PDB" id="4TVX">
    <property type="method" value="X-ray"/>
    <property type="resolution" value="3.24 A"/>
    <property type="chains" value="H/T=1-224"/>
</dbReference>
<dbReference type="PDB" id="4U7U">
    <property type="method" value="X-ray"/>
    <property type="resolution" value="3.00 A"/>
    <property type="chains" value="K/W=1-224"/>
</dbReference>
<dbReference type="PDB" id="5CD4">
    <property type="method" value="X-ray"/>
    <property type="resolution" value="3.20 A"/>
    <property type="chains" value="H/T=1-224"/>
</dbReference>
<dbReference type="PDB" id="5H9E">
    <property type="method" value="X-ray"/>
    <property type="resolution" value="3.21 A"/>
    <property type="chains" value="J=1-224"/>
</dbReference>
<dbReference type="PDB" id="5H9F">
    <property type="method" value="X-ray"/>
    <property type="resolution" value="2.45 A"/>
    <property type="chains" value="J=1-224"/>
</dbReference>
<dbReference type="PDBsum" id="4QYZ"/>
<dbReference type="PDBsum" id="4TVX"/>
<dbReference type="PDBsum" id="4U7U"/>
<dbReference type="PDBsum" id="5CD4"/>
<dbReference type="PDBsum" id="5H9E"/>
<dbReference type="PDBsum" id="5H9F"/>
<dbReference type="EMDB" id="EMD-5929"/>
<dbReference type="EMDB" id="EMD-5930"/>
<dbReference type="SMR" id="Q46898"/>
<dbReference type="BioGRID" id="4261109">
    <property type="interactions" value="692"/>
</dbReference>
<dbReference type="ComplexPortal" id="CPX-1005">
    <property type="entry name" value="Cascade complex"/>
</dbReference>
<dbReference type="DIP" id="DIP-12125N"/>
<dbReference type="FunCoup" id="Q46898">
    <property type="interactions" value="21"/>
</dbReference>
<dbReference type="IntAct" id="Q46898">
    <property type="interactions" value="4"/>
</dbReference>
<dbReference type="STRING" id="511145.b2757"/>
<dbReference type="PaxDb" id="511145-b2757"/>
<dbReference type="EnsemblBacteria" id="AAC75799">
    <property type="protein sequence ID" value="AAC75799"/>
    <property type="gene ID" value="b2757"/>
</dbReference>
<dbReference type="GeneID" id="947225"/>
<dbReference type="KEGG" id="ecj:JW5844"/>
<dbReference type="KEGG" id="eco:b2757"/>
<dbReference type="KEGG" id="ecoc:C3026_15155"/>
<dbReference type="PATRIC" id="fig|1411691.4.peg.3981"/>
<dbReference type="EchoBASE" id="EB2917"/>
<dbReference type="eggNOG" id="ENOG502ZBPB">
    <property type="taxonomic scope" value="Bacteria"/>
</dbReference>
<dbReference type="HOGENOM" id="CLU_084726_0_0_6"/>
<dbReference type="InParanoid" id="Q46898"/>
<dbReference type="OMA" id="DYHTTQV"/>
<dbReference type="OrthoDB" id="5704083at2"/>
<dbReference type="PhylomeDB" id="Q46898"/>
<dbReference type="BioCyc" id="EcoCyc:G7427-MONOMER"/>
<dbReference type="BioCyc" id="MetaCyc:G7427-MONOMER"/>
<dbReference type="EvolutionaryTrace" id="Q46898"/>
<dbReference type="PRO" id="PR:Q46898"/>
<dbReference type="Proteomes" id="UP000000625">
    <property type="component" value="Chromosome"/>
</dbReference>
<dbReference type="GO" id="GO:0032991">
    <property type="term" value="C:protein-containing complex"/>
    <property type="evidence" value="ECO:0000314"/>
    <property type="project" value="EcoCyc"/>
</dbReference>
<dbReference type="GO" id="GO:0071667">
    <property type="term" value="F:DNA/RNA hybrid binding"/>
    <property type="evidence" value="ECO:0000314"/>
    <property type="project" value="EcoCyc"/>
</dbReference>
<dbReference type="GO" id="GO:0003723">
    <property type="term" value="F:RNA binding"/>
    <property type="evidence" value="ECO:0000314"/>
    <property type="project" value="EcoCyc"/>
</dbReference>
<dbReference type="GO" id="GO:0099048">
    <property type="term" value="P:CRISPR-cas system"/>
    <property type="evidence" value="ECO:0000314"/>
    <property type="project" value="ComplexPortal"/>
</dbReference>
<dbReference type="GO" id="GO:0051607">
    <property type="term" value="P:defense response to virus"/>
    <property type="evidence" value="ECO:0000314"/>
    <property type="project" value="EcoCyc"/>
</dbReference>
<dbReference type="GO" id="GO:0043571">
    <property type="term" value="P:maintenance of CRISPR repeat elements"/>
    <property type="evidence" value="ECO:0007669"/>
    <property type="project" value="InterPro"/>
</dbReference>
<dbReference type="CDD" id="cd09645">
    <property type="entry name" value="Cas5_I-E"/>
    <property type="match status" value="1"/>
</dbReference>
<dbReference type="Gene3D" id="3.30.70.2660">
    <property type="match status" value="1"/>
</dbReference>
<dbReference type="InterPro" id="IPR021124">
    <property type="entry name" value="CRISPR-assoc_prot_Cas5"/>
</dbReference>
<dbReference type="InterPro" id="IPR013422">
    <property type="entry name" value="CRISPR-assoc_prot_Cas5_N"/>
</dbReference>
<dbReference type="InterPro" id="IPR010147">
    <property type="entry name" value="CRISPR-assoc_prot_CasD"/>
</dbReference>
<dbReference type="NCBIfam" id="TIGR01868">
    <property type="entry name" value="casD_Cas5e"/>
    <property type="match status" value="1"/>
</dbReference>
<dbReference type="NCBIfam" id="TIGR02593">
    <property type="entry name" value="CRISPR_cas5"/>
    <property type="match status" value="1"/>
</dbReference>
<dbReference type="Pfam" id="PF09704">
    <property type="entry name" value="Cas_Cas5d"/>
    <property type="match status" value="1"/>
</dbReference>
<evidence type="ECO:0000269" key="1">
    <source>
    </source>
</evidence>
<evidence type="ECO:0000269" key="2">
    <source>
    </source>
</evidence>
<evidence type="ECO:0000269" key="3">
    <source>
    </source>
</evidence>
<evidence type="ECO:0000269" key="4">
    <source>
    </source>
</evidence>
<evidence type="ECO:0000269" key="5">
    <source>
    </source>
</evidence>
<evidence type="ECO:0000269" key="6">
    <source>
    </source>
</evidence>
<evidence type="ECO:0000269" key="7">
    <source>
    </source>
</evidence>
<evidence type="ECO:0000269" key="8">
    <source>
    </source>
</evidence>
<evidence type="ECO:0000305" key="9"/>
<evidence type="ECO:0007829" key="10">
    <source>
        <dbReference type="PDB" id="5CD4"/>
    </source>
</evidence>
<evidence type="ECO:0007829" key="11">
    <source>
        <dbReference type="PDB" id="5H9F"/>
    </source>
</evidence>
<keyword id="KW-0002">3D-structure</keyword>
<keyword id="KW-0051">Antiviral defense</keyword>
<keyword id="KW-1185">Reference proteome</keyword>
<comment type="function">
    <text>CRISPR (clustered regularly interspaced short palindromic repeat), is an adaptive immune system that provides protection against mobile genetic elements (viruses, transposable elements and conjugative plasmids). CRISPR clusters contain sequences complementary to antecedent mobile elements and target invading nucleic acids. CRISPR clusters are transcribed and processed into CRISPR RNA (crRNA).</text>
</comment>
<comment type="function">
    <text>A component of Cascade, which participates in CRISPR interference, the third stage of CRISPR immunity. Cascade binds both crRNA and in a sequence-specific manner negatively supercoiled dsDNA target. This leads to the formation of an R-loop in which the crRNA binds the target DNA, displacing the noncomplementary strand. Cas3 is recruited to Cascade, nicks target DNA and then unwinds and cleaves the target, leading to DNA degradation and invader neutralization. CasCDE alone is also able to form R-loops.</text>
</comment>
<comment type="subunit">
    <text evidence="1 4 5 6 7 8">Part of the Cascade ribonucleoprotein complex, with stoichiometry CasA(1),CasB(2),CasC(6),CasD(1),CasE(1)-crRNA(1). Interacts directly with CasA and CasC. Stable subcomplexes of CasBCDE-crRNA and CasCDE-crRNA also form, both of which are able to bind target dsDNA, and at least CasCDE is able to form R-loops. CasCDE and CasCE complexes have endonuclease activity. Binding of target ssRNA or dsDNA causes a conformational change in the Cascade complex.</text>
</comment>
<comment type="induction">
    <text evidence="2 3 4">Repressed by H-NS, activated by LeuO. Activated by the BaeSR two-component regulatory system, possibly due to envelope stress. Part of the casABCDE-ygbT-ygbF operon.</text>
</comment>
<comment type="mass spectrometry" mass="25210.4" error="3.8" method="Unknown" evidence="5"/>
<comment type="disruption phenotype">
    <text evidence="1 4 5">Loss of resistance to bacteriophage lambda infection, loss of plasmid silencing. Decreased levels of crRNA.</text>
</comment>
<comment type="similarity">
    <text evidence="9">Belongs to the CRISPR-associated protein Cas5 family. Subtype I-E/Ecoli subfamily.</text>
</comment>
<comment type="sequence caution" evidence="9">
    <conflict type="erroneous initiation">
        <sequence resource="EMBL-CDS" id="AAA69267"/>
    </conflict>
    <text>Extended N-terminus.</text>
</comment>